<comment type="function">
    <text evidence="1 3">Hydrolyzes D-aminoacyl-tRNA into D-amino acid and free tRNA. Broad specificity toward the amino acid, but strict specificity toward the D-isomer. Seems to be required for ethanol tolerance.</text>
</comment>
<comment type="catalytic activity">
    <reaction evidence="3">
        <text>a D-aminoacyl-tRNA + H2O = a tRNA + a D-alpha-amino acid + H(+)</text>
        <dbReference type="Rhea" id="RHEA:13953"/>
        <dbReference type="Rhea" id="RHEA-COMP:10123"/>
        <dbReference type="Rhea" id="RHEA-COMP:10124"/>
        <dbReference type="ChEBI" id="CHEBI:15377"/>
        <dbReference type="ChEBI" id="CHEBI:15378"/>
        <dbReference type="ChEBI" id="CHEBI:59871"/>
        <dbReference type="ChEBI" id="CHEBI:78442"/>
        <dbReference type="ChEBI" id="CHEBI:79333"/>
        <dbReference type="EC" id="3.1.1.96"/>
    </reaction>
</comment>
<comment type="catalytic activity">
    <reaction evidence="3">
        <text>glycyl-tRNA(Ala) + H2O = tRNA(Ala) + glycine + H(+)</text>
        <dbReference type="Rhea" id="RHEA:53744"/>
        <dbReference type="Rhea" id="RHEA-COMP:9657"/>
        <dbReference type="Rhea" id="RHEA-COMP:13640"/>
        <dbReference type="ChEBI" id="CHEBI:15377"/>
        <dbReference type="ChEBI" id="CHEBI:15378"/>
        <dbReference type="ChEBI" id="CHEBI:57305"/>
        <dbReference type="ChEBI" id="CHEBI:78442"/>
        <dbReference type="ChEBI" id="CHEBI:78522"/>
        <dbReference type="EC" id="3.1.1.96"/>
    </reaction>
</comment>
<comment type="cofactor">
    <cofactor evidence="3">
        <name>Zn(2+)</name>
        <dbReference type="ChEBI" id="CHEBI:29105"/>
    </cofactor>
    <text evidence="3">Binds 2 Zn(2+) ions per subunit.</text>
</comment>
<comment type="biophysicochemical properties">
    <kinetics>
        <KM evidence="3">1.1 uM for D-tyrosyl-tRNA(Tyr)</KM>
    </kinetics>
</comment>
<comment type="subcellular location">
    <subcellularLocation>
        <location evidence="1">Nucleus</location>
    </subcellularLocation>
    <subcellularLocation>
        <location evidence="1">Cytoplasm</location>
    </subcellularLocation>
</comment>
<comment type="tissue specificity">
    <text evidence="1">Ubiquitous.</text>
</comment>
<comment type="induction">
    <text evidence="1">Not induced by abscisic acid, paraquat, 1-aminocyclopropane-1-carboxylate, ethanol, salt, sorbitol, cold, heat or low oxygen stresses.</text>
</comment>
<comment type="disruption phenotype">
    <text evidence="2">Increased sensitivity to acetaldehyde and hypersensitivity to ethanol.</text>
</comment>
<comment type="similarity">
    <text evidence="5">Belongs to the DtdA deacylase family.</text>
</comment>
<comment type="sequence caution" evidence="5">
    <conflict type="erroneous initiation">
        <sequence resource="EMBL-CDS" id="AAD20081"/>
    </conflict>
    <text>Extended N-terminus.</text>
</comment>
<evidence type="ECO:0000269" key="1">
    <source>
    </source>
</evidence>
<evidence type="ECO:0000269" key="2">
    <source>
    </source>
</evidence>
<evidence type="ECO:0000269" key="3">
    <source>
    </source>
</evidence>
<evidence type="ECO:0000303" key="4">
    <source>
    </source>
</evidence>
<evidence type="ECO:0000305" key="5"/>
<sequence length="317" mass="34732">MVTLIVATTADPASINPAAALLAMPGWTAGPILPPDIKSFSNKQTRVIQHDRSIVKEDDLDLRWEEATGEVVDEVIFLSRHTAVSNRPALTVHPIGVLHLKDGESPPQGGKPGWAALPSTRIGPWFRLLKKMAEAHGLVPEFEITLEATHHGPITNKPTMFLEIGSTEEYWKRQDAAQVMALLMWEGLGLGGSEEVGKWKSETGKRKVLLGIGGGHYAPRHMDIALKDDIWVGHLLSGYSLPMEDPTQTKTTPGENYIGGNWRQSIKAAFEATKASFPGGEILAHLDHKSFKGWQKKAITEFLAEESINVGKPNDFT</sequence>
<accession>Q9ZPQ3</accession>
<accession>Q0WQB9</accession>
<accession>Q76KI8</accession>
<organism>
    <name type="scientific">Arabidopsis thaliana</name>
    <name type="common">Mouse-ear cress</name>
    <dbReference type="NCBI Taxonomy" id="3702"/>
    <lineage>
        <taxon>Eukaryota</taxon>
        <taxon>Viridiplantae</taxon>
        <taxon>Streptophyta</taxon>
        <taxon>Embryophyta</taxon>
        <taxon>Tracheophyta</taxon>
        <taxon>Spermatophyta</taxon>
        <taxon>Magnoliopsida</taxon>
        <taxon>eudicotyledons</taxon>
        <taxon>Gunneridae</taxon>
        <taxon>Pentapetalae</taxon>
        <taxon>rosids</taxon>
        <taxon>malvids</taxon>
        <taxon>Brassicales</taxon>
        <taxon>Brassicaceae</taxon>
        <taxon>Camelineae</taxon>
        <taxon>Arabidopsis</taxon>
    </lineage>
</organism>
<proteinExistence type="evidence at protein level"/>
<reference key="1">
    <citation type="journal article" date="2004" name="Plant Cell Physiol.">
        <title>A novel Arabidopsis gene required for ethanol tolerance is conserved among plants and Archaea.</title>
        <authorList>
            <person name="Fujishige N."/>
            <person name="Nishimura N."/>
            <person name="Iuchi S."/>
            <person name="Kunii T."/>
            <person name="Shinozaki K."/>
            <person name="Hirayama T."/>
        </authorList>
    </citation>
    <scope>NUCLEOTIDE SEQUENCE [MRNA]</scope>
    <scope>FUNCTION</scope>
    <scope>TISSUE SPECIFICITY</scope>
    <scope>SUBCELLULAR LOCATION</scope>
    <scope>INDUCTION</scope>
    <source>
        <strain>cv. Columbia</strain>
    </source>
</reference>
<reference key="2">
    <citation type="journal article" date="1999" name="Nature">
        <title>Sequence and analysis of chromosome 2 of the plant Arabidopsis thaliana.</title>
        <authorList>
            <person name="Lin X."/>
            <person name="Kaul S."/>
            <person name="Rounsley S.D."/>
            <person name="Shea T.P."/>
            <person name="Benito M.-I."/>
            <person name="Town C.D."/>
            <person name="Fujii C.Y."/>
            <person name="Mason T.M."/>
            <person name="Bowman C.L."/>
            <person name="Barnstead M.E."/>
            <person name="Feldblyum T.V."/>
            <person name="Buell C.R."/>
            <person name="Ketchum K.A."/>
            <person name="Lee J.J."/>
            <person name="Ronning C.M."/>
            <person name="Koo H.L."/>
            <person name="Moffat K.S."/>
            <person name="Cronin L.A."/>
            <person name="Shen M."/>
            <person name="Pai G."/>
            <person name="Van Aken S."/>
            <person name="Umayam L."/>
            <person name="Tallon L.J."/>
            <person name="Gill J.E."/>
            <person name="Adams M.D."/>
            <person name="Carrera A.J."/>
            <person name="Creasy T.H."/>
            <person name="Goodman H.M."/>
            <person name="Somerville C.R."/>
            <person name="Copenhaver G.P."/>
            <person name="Preuss D."/>
            <person name="Nierman W.C."/>
            <person name="White O."/>
            <person name="Eisen J.A."/>
            <person name="Salzberg S.L."/>
            <person name="Fraser C.M."/>
            <person name="Venter J.C."/>
        </authorList>
    </citation>
    <scope>NUCLEOTIDE SEQUENCE [LARGE SCALE GENOMIC DNA]</scope>
    <source>
        <strain>cv. Columbia</strain>
    </source>
</reference>
<reference key="3">
    <citation type="journal article" date="2017" name="Plant J.">
        <title>Araport11: a complete reannotation of the Arabidopsis thaliana reference genome.</title>
        <authorList>
            <person name="Cheng C.Y."/>
            <person name="Krishnakumar V."/>
            <person name="Chan A.P."/>
            <person name="Thibaud-Nissen F."/>
            <person name="Schobel S."/>
            <person name="Town C.D."/>
        </authorList>
    </citation>
    <scope>GENOME REANNOTATION</scope>
    <source>
        <strain>cv. Columbia</strain>
    </source>
</reference>
<reference key="4">
    <citation type="submission" date="2005-05" db="EMBL/GenBank/DDBJ databases">
        <title>Arabidopsis cDNA clones.</title>
        <authorList>
            <person name="Shinn P."/>
            <person name="Chen H."/>
            <person name="Cheuk R.F."/>
            <person name="Kim C.J."/>
            <person name="Ecker J.R."/>
        </authorList>
    </citation>
    <scope>NUCLEOTIDE SEQUENCE [LARGE SCALE MRNA]</scope>
    <source>
        <strain>cv. Columbia</strain>
    </source>
</reference>
<reference key="5">
    <citation type="submission" date="2006-07" db="EMBL/GenBank/DDBJ databases">
        <title>Large-scale analysis of RIKEN Arabidopsis full-length (RAFL) cDNAs.</title>
        <authorList>
            <person name="Totoki Y."/>
            <person name="Seki M."/>
            <person name="Ishida J."/>
            <person name="Nakajima M."/>
            <person name="Enju A."/>
            <person name="Kamiya A."/>
            <person name="Narusaka M."/>
            <person name="Shin-i T."/>
            <person name="Nakagawa M."/>
            <person name="Sakamoto N."/>
            <person name="Oishi K."/>
            <person name="Kohara Y."/>
            <person name="Kobayashi M."/>
            <person name="Toyoda A."/>
            <person name="Sakaki Y."/>
            <person name="Sakurai T."/>
            <person name="Iida K."/>
            <person name="Akiyama K."/>
            <person name="Satou M."/>
            <person name="Toyoda T."/>
            <person name="Konagaya A."/>
            <person name="Carninci P."/>
            <person name="Kawai J."/>
            <person name="Hayashizaki Y."/>
            <person name="Shinozaki K."/>
        </authorList>
    </citation>
    <scope>NUCLEOTIDE SEQUENCE [LARGE SCALE MRNA]</scope>
    <source>
        <strain>cv. Columbia</strain>
    </source>
</reference>
<reference key="6">
    <citation type="journal article" date="2004" name="Plant Cell Physiol.">
        <title>A novel ethanol-hypersensitive mutant of Arabidopsis.</title>
        <authorList>
            <person name="Hirayama T."/>
            <person name="Fujishige N."/>
            <person name="Kunii T."/>
            <person name="Nishimura N."/>
            <person name="Iuchi S."/>
            <person name="Shinozaki K."/>
        </authorList>
    </citation>
    <scope>DISRUPTION PHENOTYPE</scope>
</reference>
<reference key="7">
    <citation type="journal article" date="2007" name="Nucleic Acids Res.">
        <title>GEK1, a gene product of Arabidopsis thaliana involved in ethanol tolerance, is a D-aminoacyl-tRNA deacylase.</title>
        <authorList>
            <person name="Wydau S."/>
            <person name="Ferri-Fioni M.-L."/>
            <person name="Blanquet S."/>
            <person name="Plateau P."/>
        </authorList>
    </citation>
    <scope>FUNCTION</scope>
    <scope>CATALYTIC ACTIVITY</scope>
    <scope>BIOPHYSICOCHEMICAL PROPERTIES</scope>
    <scope>COFACTOR</scope>
</reference>
<keyword id="KW-0963">Cytoplasm</keyword>
<keyword id="KW-0378">Hydrolase</keyword>
<keyword id="KW-0479">Metal-binding</keyword>
<keyword id="KW-0539">Nucleus</keyword>
<keyword id="KW-1185">Reference proteome</keyword>
<keyword id="KW-0862">Zinc</keyword>
<protein>
    <recommendedName>
        <fullName evidence="4">D-aminoacyl-tRNA deacylase</fullName>
        <ecNumber evidence="3">3.1.1.96</ecNumber>
    </recommendedName>
    <alternativeName>
        <fullName>Ethanol tolerance protein GEKO1</fullName>
    </alternativeName>
</protein>
<dbReference type="EC" id="3.1.1.96" evidence="3"/>
<dbReference type="EMBL" id="AB091252">
    <property type="protein sequence ID" value="BAC65101.1"/>
    <property type="molecule type" value="mRNA"/>
</dbReference>
<dbReference type="EMBL" id="AC006836">
    <property type="protein sequence ID" value="AAD20081.1"/>
    <property type="status" value="ALT_INIT"/>
    <property type="molecule type" value="Genomic_DNA"/>
</dbReference>
<dbReference type="EMBL" id="CP002685">
    <property type="protein sequence ID" value="AEC05749.1"/>
    <property type="molecule type" value="Genomic_DNA"/>
</dbReference>
<dbReference type="EMBL" id="BT022079">
    <property type="protein sequence ID" value="AAY27066.1"/>
    <property type="molecule type" value="mRNA"/>
</dbReference>
<dbReference type="EMBL" id="AK228782">
    <property type="protein sequence ID" value="BAF00680.1"/>
    <property type="molecule type" value="mRNA"/>
</dbReference>
<dbReference type="PIR" id="D84452">
    <property type="entry name" value="D84452"/>
</dbReference>
<dbReference type="RefSeq" id="NP_001325274.1">
    <property type="nucleotide sequence ID" value="NM_001335203.1"/>
</dbReference>
<dbReference type="RefSeq" id="NP_178474.2">
    <property type="nucleotide sequence ID" value="NM_126426.5"/>
</dbReference>
<dbReference type="SMR" id="Q9ZPQ3"/>
<dbReference type="BioGRID" id="307">
    <property type="interactions" value="1"/>
</dbReference>
<dbReference type="FunCoup" id="Q9ZPQ3">
    <property type="interactions" value="309"/>
</dbReference>
<dbReference type="STRING" id="3702.Q9ZPQ3"/>
<dbReference type="iPTMnet" id="Q9ZPQ3"/>
<dbReference type="PaxDb" id="3702-AT2G03800.1"/>
<dbReference type="ProteomicsDB" id="224768"/>
<dbReference type="EnsemblPlants" id="AT2G03800.1">
    <property type="protein sequence ID" value="AT2G03800.1"/>
    <property type="gene ID" value="AT2G03800"/>
</dbReference>
<dbReference type="GeneID" id="814906"/>
<dbReference type="Gramene" id="AT2G03800.1">
    <property type="protein sequence ID" value="AT2G03800.1"/>
    <property type="gene ID" value="AT2G03800"/>
</dbReference>
<dbReference type="KEGG" id="ath:AT2G03800"/>
<dbReference type="Araport" id="AT2G03800"/>
<dbReference type="TAIR" id="AT2G03800">
    <property type="gene designation" value="GEK1"/>
</dbReference>
<dbReference type="eggNOG" id="ENOG502QRIE">
    <property type="taxonomic scope" value="Eukaryota"/>
</dbReference>
<dbReference type="HOGENOM" id="CLU_056464_0_0_1"/>
<dbReference type="InParanoid" id="Q9ZPQ3"/>
<dbReference type="OMA" id="IGKPNNF"/>
<dbReference type="OrthoDB" id="192183at2759"/>
<dbReference type="PhylomeDB" id="Q9ZPQ3"/>
<dbReference type="BRENDA" id="3.1.1.96">
    <property type="organism ID" value="399"/>
</dbReference>
<dbReference type="SABIO-RK" id="Q9ZPQ3"/>
<dbReference type="PRO" id="PR:Q9ZPQ3"/>
<dbReference type="Proteomes" id="UP000006548">
    <property type="component" value="Chromosome 2"/>
</dbReference>
<dbReference type="ExpressionAtlas" id="Q9ZPQ3">
    <property type="expression patterns" value="baseline and differential"/>
</dbReference>
<dbReference type="GO" id="GO:0005737">
    <property type="term" value="C:cytoplasm"/>
    <property type="evidence" value="ECO:0007669"/>
    <property type="project" value="UniProtKB-SubCell"/>
</dbReference>
<dbReference type="GO" id="GO:0005634">
    <property type="term" value="C:nucleus"/>
    <property type="evidence" value="ECO:0007669"/>
    <property type="project" value="UniProtKB-SubCell"/>
</dbReference>
<dbReference type="GO" id="GO:0051499">
    <property type="term" value="F:D-aminoacyl-tRNA deacylase activity"/>
    <property type="evidence" value="ECO:0000314"/>
    <property type="project" value="TAIR"/>
</dbReference>
<dbReference type="GO" id="GO:0046872">
    <property type="term" value="F:metal ion binding"/>
    <property type="evidence" value="ECO:0007669"/>
    <property type="project" value="UniProtKB-KW"/>
</dbReference>
<dbReference type="GO" id="GO:0019478">
    <property type="term" value="P:D-amino acid catabolic process"/>
    <property type="evidence" value="ECO:0007669"/>
    <property type="project" value="InterPro"/>
</dbReference>
<dbReference type="FunFam" id="3.40.50.10700:FF:000001">
    <property type="entry name" value="D-aminoacyl-tRNA deacylase"/>
    <property type="match status" value="1"/>
</dbReference>
<dbReference type="FunFam" id="3.40.630.50:FF:000001">
    <property type="entry name" value="D-aminoacyl-tRNA deacylase"/>
    <property type="match status" value="1"/>
</dbReference>
<dbReference type="Gene3D" id="3.40.50.10700">
    <property type="entry name" value="AF0625-like"/>
    <property type="match status" value="1"/>
</dbReference>
<dbReference type="Gene3D" id="3.40.630.50">
    <property type="entry name" value="AF0625-like"/>
    <property type="match status" value="1"/>
</dbReference>
<dbReference type="InterPro" id="IPR018033">
    <property type="entry name" value="Deacylase_DtdA_archaea"/>
</dbReference>
<dbReference type="InterPro" id="IPR007508">
    <property type="entry name" value="DtdA"/>
</dbReference>
<dbReference type="PANTHER" id="PTHR34667">
    <property type="entry name" value="D-AMINOACYL-TRNA DEACYLASE"/>
    <property type="match status" value="1"/>
</dbReference>
<dbReference type="PANTHER" id="PTHR34667:SF1">
    <property type="entry name" value="D-AMINOACYL-TRNA DEACYLASE"/>
    <property type="match status" value="1"/>
</dbReference>
<dbReference type="Pfam" id="PF04414">
    <property type="entry name" value="tRNA_deacylase"/>
    <property type="match status" value="1"/>
</dbReference>
<dbReference type="PIRSF" id="PIRSF016210">
    <property type="entry name" value="UCP016210"/>
    <property type="match status" value="1"/>
</dbReference>
<dbReference type="SUPFAM" id="SSF142535">
    <property type="entry name" value="AF0625-like"/>
    <property type="match status" value="1"/>
</dbReference>
<gene>
    <name type="primary">GEK1</name>
    <name type="ordered locus">At2g03800</name>
    <name type="ORF">F19B11.25</name>
</gene>
<name>GEK1_ARATH</name>
<feature type="chain" id="PRO_0000158979" description="D-aminoacyl-tRNA deacylase">
    <location>
        <begin position="1"/>
        <end position="317"/>
    </location>
</feature>